<keyword id="KW-0067">ATP-binding</keyword>
<keyword id="KW-0436">Ligase</keyword>
<keyword id="KW-0547">Nucleotide-binding</keyword>
<keyword id="KW-0648">Protein biosynthesis</keyword>
<accession>O59132</accession>
<reference key="1">
    <citation type="journal article" date="1998" name="DNA Res.">
        <title>Complete sequence and gene organization of the genome of a hyper-thermophilic archaebacterium, Pyrococcus horikoshii OT3.</title>
        <authorList>
            <person name="Kawarabayasi Y."/>
            <person name="Sawada M."/>
            <person name="Horikawa H."/>
            <person name="Haikawa Y."/>
            <person name="Hino Y."/>
            <person name="Yamamoto S."/>
            <person name="Sekine M."/>
            <person name="Baba S."/>
            <person name="Kosugi H."/>
            <person name="Hosoyama A."/>
            <person name="Nagai Y."/>
            <person name="Sakai M."/>
            <person name="Ogura K."/>
            <person name="Otsuka R."/>
            <person name="Nakazawa H."/>
            <person name="Takamiya M."/>
            <person name="Ohfuku Y."/>
            <person name="Funahashi T."/>
            <person name="Tanaka T."/>
            <person name="Kudoh Y."/>
            <person name="Yamazaki J."/>
            <person name="Kushida N."/>
            <person name="Oguchi A."/>
            <person name="Aoki K."/>
            <person name="Yoshizawa T."/>
            <person name="Nakamura Y."/>
            <person name="Robb F.T."/>
            <person name="Horikoshi K."/>
            <person name="Masuchi Y."/>
            <person name="Shizuya H."/>
            <person name="Kikuchi H."/>
        </authorList>
    </citation>
    <scope>NUCLEOTIDE SEQUENCE [LARGE SCALE GENOMIC DNA]</scope>
    <source>
        <strain>ATCC 700860 / DSM 12428 / JCM 9974 / NBRC 100139 / OT-3</strain>
    </source>
</reference>
<comment type="function">
    <text evidence="1">Allows the formation of correctly charged Gln-tRNA(Gln) through the transamidation of misacylated Glu-tRNA(Gln) in organisms which lack glutaminyl-tRNA synthetase. The reaction takes place in the presence of glutamine and ATP through an activated gamma-phospho-Glu-tRNA(Gln). The GatDE system is specific for glutamate and does not act on aspartate.</text>
</comment>
<comment type="catalytic activity">
    <reaction evidence="1">
        <text>L-glutamyl-tRNA(Gln) + L-glutamine + ATP + H2O = L-glutaminyl-tRNA(Gln) + L-glutamate + ADP + phosphate + H(+)</text>
        <dbReference type="Rhea" id="RHEA:17521"/>
        <dbReference type="Rhea" id="RHEA-COMP:9681"/>
        <dbReference type="Rhea" id="RHEA-COMP:9684"/>
        <dbReference type="ChEBI" id="CHEBI:15377"/>
        <dbReference type="ChEBI" id="CHEBI:15378"/>
        <dbReference type="ChEBI" id="CHEBI:29985"/>
        <dbReference type="ChEBI" id="CHEBI:30616"/>
        <dbReference type="ChEBI" id="CHEBI:43474"/>
        <dbReference type="ChEBI" id="CHEBI:58359"/>
        <dbReference type="ChEBI" id="CHEBI:78520"/>
        <dbReference type="ChEBI" id="CHEBI:78521"/>
        <dbReference type="ChEBI" id="CHEBI:456216"/>
    </reaction>
</comment>
<comment type="subunit">
    <text evidence="1">Heterodimer of GatD and GatE.</text>
</comment>
<comment type="similarity">
    <text evidence="1">Belongs to the asparaginase 1 family. GatD subfamily.</text>
</comment>
<gene>
    <name evidence="1" type="primary">gatD</name>
    <name type="ordered locus">PH1463</name>
</gene>
<proteinExistence type="inferred from homology"/>
<dbReference type="EC" id="6.3.5.-" evidence="1"/>
<dbReference type="EMBL" id="BA000001">
    <property type="protein sequence ID" value="BAA30570.1"/>
    <property type="molecule type" value="Genomic_DNA"/>
</dbReference>
<dbReference type="PIR" id="B71021">
    <property type="entry name" value="B71021"/>
</dbReference>
<dbReference type="RefSeq" id="WP_010885545.1">
    <property type="nucleotide sequence ID" value="NC_000961.1"/>
</dbReference>
<dbReference type="SMR" id="O59132"/>
<dbReference type="STRING" id="70601.gene:9378440"/>
<dbReference type="EnsemblBacteria" id="BAA30570">
    <property type="protein sequence ID" value="BAA30570"/>
    <property type="gene ID" value="BAA30570"/>
</dbReference>
<dbReference type="GeneID" id="1443783"/>
<dbReference type="KEGG" id="pho:PH1463"/>
<dbReference type="eggNOG" id="arCOG01924">
    <property type="taxonomic scope" value="Archaea"/>
</dbReference>
<dbReference type="OrthoDB" id="371959at2157"/>
<dbReference type="Proteomes" id="UP000000752">
    <property type="component" value="Chromosome"/>
</dbReference>
<dbReference type="GO" id="GO:0004067">
    <property type="term" value="F:asparaginase activity"/>
    <property type="evidence" value="ECO:0007669"/>
    <property type="project" value="InterPro"/>
</dbReference>
<dbReference type="GO" id="GO:0005524">
    <property type="term" value="F:ATP binding"/>
    <property type="evidence" value="ECO:0007669"/>
    <property type="project" value="UniProtKB-KW"/>
</dbReference>
<dbReference type="GO" id="GO:0050567">
    <property type="term" value="F:glutaminyl-tRNA synthase (glutamine-hydrolyzing) activity"/>
    <property type="evidence" value="ECO:0007669"/>
    <property type="project" value="UniProtKB-UniRule"/>
</dbReference>
<dbReference type="GO" id="GO:0006520">
    <property type="term" value="P:amino acid metabolic process"/>
    <property type="evidence" value="ECO:0007669"/>
    <property type="project" value="InterPro"/>
</dbReference>
<dbReference type="GO" id="GO:0006450">
    <property type="term" value="P:regulation of translational fidelity"/>
    <property type="evidence" value="ECO:0007669"/>
    <property type="project" value="InterPro"/>
</dbReference>
<dbReference type="GO" id="GO:0006412">
    <property type="term" value="P:translation"/>
    <property type="evidence" value="ECO:0007669"/>
    <property type="project" value="UniProtKB-UniRule"/>
</dbReference>
<dbReference type="CDD" id="cd08962">
    <property type="entry name" value="GatD"/>
    <property type="match status" value="1"/>
</dbReference>
<dbReference type="Gene3D" id="2.30.30.520">
    <property type="match status" value="1"/>
</dbReference>
<dbReference type="Gene3D" id="3.40.50.40">
    <property type="match status" value="1"/>
</dbReference>
<dbReference type="Gene3D" id="3.40.50.1170">
    <property type="entry name" value="L-asparaginase, N-terminal domain"/>
    <property type="match status" value="1"/>
</dbReference>
<dbReference type="HAMAP" id="MF_00586">
    <property type="entry name" value="GatD"/>
    <property type="match status" value="1"/>
</dbReference>
<dbReference type="InterPro" id="IPR006033">
    <property type="entry name" value="AsnA_fam"/>
</dbReference>
<dbReference type="InterPro" id="IPR036152">
    <property type="entry name" value="Asp/glu_Ase-like_sf"/>
</dbReference>
<dbReference type="InterPro" id="IPR006034">
    <property type="entry name" value="Asparaginase/glutaminase-like"/>
</dbReference>
<dbReference type="InterPro" id="IPR020827">
    <property type="entry name" value="Asparaginase/glutaminase_AS1"/>
</dbReference>
<dbReference type="InterPro" id="IPR027475">
    <property type="entry name" value="Asparaginase/glutaminase_AS2"/>
</dbReference>
<dbReference type="InterPro" id="IPR040919">
    <property type="entry name" value="Asparaginase_C"/>
</dbReference>
<dbReference type="InterPro" id="IPR011878">
    <property type="entry name" value="GatD"/>
</dbReference>
<dbReference type="InterPro" id="IPR040918">
    <property type="entry name" value="GatD_N"/>
</dbReference>
<dbReference type="InterPro" id="IPR037222">
    <property type="entry name" value="GatD_N_sf"/>
</dbReference>
<dbReference type="InterPro" id="IPR027473">
    <property type="entry name" value="L-asparaginase_C"/>
</dbReference>
<dbReference type="InterPro" id="IPR027474">
    <property type="entry name" value="L-asparaginase_N"/>
</dbReference>
<dbReference type="InterPro" id="IPR037152">
    <property type="entry name" value="L-asparaginase_N_sf"/>
</dbReference>
<dbReference type="NCBIfam" id="TIGR00519">
    <property type="entry name" value="asnASE_I"/>
    <property type="match status" value="1"/>
</dbReference>
<dbReference type="NCBIfam" id="TIGR02153">
    <property type="entry name" value="gatD_arch"/>
    <property type="match status" value="1"/>
</dbReference>
<dbReference type="NCBIfam" id="NF003217">
    <property type="entry name" value="PRK04183.1"/>
    <property type="match status" value="1"/>
</dbReference>
<dbReference type="PANTHER" id="PTHR11707:SF28">
    <property type="entry name" value="60 KDA LYSOPHOSPHOLIPASE"/>
    <property type="match status" value="1"/>
</dbReference>
<dbReference type="PANTHER" id="PTHR11707">
    <property type="entry name" value="L-ASPARAGINASE"/>
    <property type="match status" value="1"/>
</dbReference>
<dbReference type="Pfam" id="PF00710">
    <property type="entry name" value="Asparaginase"/>
    <property type="match status" value="1"/>
</dbReference>
<dbReference type="Pfam" id="PF17763">
    <property type="entry name" value="Asparaginase_C"/>
    <property type="match status" value="1"/>
</dbReference>
<dbReference type="Pfam" id="PF18195">
    <property type="entry name" value="GatD_N"/>
    <property type="match status" value="1"/>
</dbReference>
<dbReference type="PIRSF" id="PIRSF500175">
    <property type="entry name" value="Glu_ADT_D"/>
    <property type="match status" value="1"/>
</dbReference>
<dbReference type="PIRSF" id="PIRSF001220">
    <property type="entry name" value="L-ASNase_gatD"/>
    <property type="match status" value="1"/>
</dbReference>
<dbReference type="PRINTS" id="PR00139">
    <property type="entry name" value="ASNGLNASE"/>
</dbReference>
<dbReference type="SMART" id="SM00870">
    <property type="entry name" value="Asparaginase"/>
    <property type="match status" value="1"/>
</dbReference>
<dbReference type="SUPFAM" id="SSF141300">
    <property type="entry name" value="GatD N-terminal domain-like"/>
    <property type="match status" value="1"/>
</dbReference>
<dbReference type="SUPFAM" id="SSF53774">
    <property type="entry name" value="Glutaminase/Asparaginase"/>
    <property type="match status" value="1"/>
</dbReference>
<dbReference type="PROSITE" id="PS00144">
    <property type="entry name" value="ASN_GLN_ASE_1"/>
    <property type="match status" value="1"/>
</dbReference>
<dbReference type="PROSITE" id="PS00917">
    <property type="entry name" value="ASN_GLN_ASE_2"/>
    <property type="match status" value="1"/>
</dbReference>
<dbReference type="PROSITE" id="PS51732">
    <property type="entry name" value="ASN_GLN_ASE_3"/>
    <property type="match status" value="1"/>
</dbReference>
<feature type="chain" id="PRO_0000140061" description="Glutamyl-tRNA(Gln) amidotransferase subunit D">
    <location>
        <begin position="1"/>
        <end position="438"/>
    </location>
</feature>
<feature type="domain" description="Asparaginase/glutaminase" evidence="2">
    <location>
        <begin position="92"/>
        <end position="422"/>
    </location>
</feature>
<feature type="active site" evidence="1">
    <location>
        <position position="102"/>
    </location>
</feature>
<feature type="active site" evidence="1">
    <location>
        <position position="178"/>
    </location>
</feature>
<feature type="active site" evidence="1">
    <location>
        <position position="179"/>
    </location>
</feature>
<feature type="active site" evidence="1">
    <location>
        <position position="256"/>
    </location>
</feature>
<sequence>MRVEEFLKEKNINIGDFIRVIKEEDGEEVIYEGYVMPPYELSPGDTLVLKLENGYNIGIALSKIRRVEVIERAKVKPEIHFEAFIEGKPHLPDVTIIGTGGTIASRIDYETGAVYPAFTAEELAKAVPEIFEIANIKPKLLFNIFSEDMKPKHWIKIAHEVAKSLNSGDSGVVVAHGTDTMGYTAAALSFMLRDLGKPVILVGAQRSSDRPSSDAAMNLICSVRMSTSDVAEVMVVMHGETGDTYCLAHRGTKVRKMHTSRRDAFRSINDVPIAKVWPNGKIEFLRDDYRRRSDSEVWVDDKLEEKVALVKVYPGISSEIIEFFIDKGYRGIVIEGTGLGHTPNDIIPSIQRATEEGIAVCMTSQCIYGRVNLNVYATGRRLLKAGVIPCEDMLPETAYVKLMWVLGHTQDLEEVRRMMLTNYAGEITPYTRFDTYLR</sequence>
<name>GATD_PYRHO</name>
<protein>
    <recommendedName>
        <fullName evidence="1">Glutamyl-tRNA(Gln) amidotransferase subunit D</fullName>
        <shortName evidence="1">Glu-ADT subunit D</shortName>
        <ecNumber evidence="1">6.3.5.-</ecNumber>
    </recommendedName>
</protein>
<evidence type="ECO:0000255" key="1">
    <source>
        <dbReference type="HAMAP-Rule" id="MF_00586"/>
    </source>
</evidence>
<evidence type="ECO:0000255" key="2">
    <source>
        <dbReference type="PROSITE-ProRule" id="PRU01068"/>
    </source>
</evidence>
<organism>
    <name type="scientific">Pyrococcus horikoshii (strain ATCC 700860 / DSM 12428 / JCM 9974 / NBRC 100139 / OT-3)</name>
    <dbReference type="NCBI Taxonomy" id="70601"/>
    <lineage>
        <taxon>Archaea</taxon>
        <taxon>Methanobacteriati</taxon>
        <taxon>Methanobacteriota</taxon>
        <taxon>Thermococci</taxon>
        <taxon>Thermococcales</taxon>
        <taxon>Thermococcaceae</taxon>
        <taxon>Pyrococcus</taxon>
    </lineage>
</organism>